<sequence length="913" mass="103137">MFAPLLKKLFGSKNEREVKRMLKTVQIVNAFEEQMVALSDDQLRAKTAEFKARIAKGETLDKLLPEAFAVAREAGKRIMGMRHFDVQLIGGMTLHEGKIAEMRTGEGKTLVATLGVYLNALSGKGVHVVTVNDYLARRDANWMRPLYEFLGLSVGVVTPFQPPEEKRAAYAADITYGTNNEFGFDYLRDNMAFSMEDKFQRELNFAVIDEVDSILIDEARTPLIISGQAEDSSRLYTEINKLIPRLEQHIEEVEGQVTKAGHFTVDEKTRQVELNEAGHQFIEEMLTQVGLLAEGESLYSAHNLGLLTHVYAGLRAHKLFNRNVEYIVQDGQVVLVDEHTGRTMPGRRLSEGLHQAIEAKENLNIQAESQTLASTTFQNYFRLYTKLSGMTGTADTEAFEFHQIYGLQVMVIPPNKPLARKDYNDLVFLTADEKYAAIINDIKECMTQGRPVLVGTATIETSEHMSNLLNKEGIEHKVLNAKFHEKEAEIIAQAGRPGALTIATNMAGRGTDILLGGNWEVEVASLENPTPEQIAQIKADWQKRHQQVLESGGLQVIASERHESRRIDNQLRGRAGRQGDAGSSRFYLSLEDSLMRIFASDRVKNFMKALGMQSGEAIEHRMVTNAIEKAQRKVEGRNFDIRKQLLEFDDVNNEQRKVIYHMRNTLLAADNIGETIADFRQDVLNATVSAHIPPQSLPEQWDVAGLEEAIQSGFGVSLPIQQWLDEDDHLYEETLREKLLNELIAAYNEKEDQAGAEALRTFEKQIVLRVLDDLWKDHLSTMDHLRHGIHLRGYAQKNPKQEYKRESFTLFSELLDSIKRDSIRVLSHVQVRREDPAEEEARLRQEAEALAQRMQFEHAEAPGLDQPEALEEGVEVDVALATAPVRNEQKLGRNELCYCGSGKKYKHCHGQIN</sequence>
<keyword id="KW-0067">ATP-binding</keyword>
<keyword id="KW-0997">Cell inner membrane</keyword>
<keyword id="KW-1003">Cell membrane</keyword>
<keyword id="KW-0963">Cytoplasm</keyword>
<keyword id="KW-0472">Membrane</keyword>
<keyword id="KW-0479">Metal-binding</keyword>
<keyword id="KW-0547">Nucleotide-binding</keyword>
<keyword id="KW-0653">Protein transport</keyword>
<keyword id="KW-1278">Translocase</keyword>
<keyword id="KW-0811">Translocation</keyword>
<keyword id="KW-0813">Transport</keyword>
<keyword id="KW-0862">Zinc</keyword>
<proteinExistence type="inferred from homology"/>
<reference key="1">
    <citation type="journal article" date="2005" name="Nat. Biotechnol.">
        <title>Complete genome sequence of the plant commensal Pseudomonas fluorescens Pf-5.</title>
        <authorList>
            <person name="Paulsen I.T."/>
            <person name="Press C.M."/>
            <person name="Ravel J."/>
            <person name="Kobayashi D.Y."/>
            <person name="Myers G.S.A."/>
            <person name="Mavrodi D.V."/>
            <person name="DeBoy R.T."/>
            <person name="Seshadri R."/>
            <person name="Ren Q."/>
            <person name="Madupu R."/>
            <person name="Dodson R.J."/>
            <person name="Durkin A.S."/>
            <person name="Brinkac L.M."/>
            <person name="Daugherty S.C."/>
            <person name="Sullivan S.A."/>
            <person name="Rosovitz M.J."/>
            <person name="Gwinn M.L."/>
            <person name="Zhou L."/>
            <person name="Schneider D.J."/>
            <person name="Cartinhour S.W."/>
            <person name="Nelson W.C."/>
            <person name="Weidman J."/>
            <person name="Watkins K."/>
            <person name="Tran K."/>
            <person name="Khouri H."/>
            <person name="Pierson E.A."/>
            <person name="Pierson L.S. III"/>
            <person name="Thomashow L.S."/>
            <person name="Loper J.E."/>
        </authorList>
    </citation>
    <scope>NUCLEOTIDE SEQUENCE [LARGE SCALE GENOMIC DNA]</scope>
    <source>
        <strain>ATCC BAA-477 / NRRL B-23932 / Pf-5</strain>
    </source>
</reference>
<protein>
    <recommendedName>
        <fullName evidence="1">Protein translocase subunit SecA</fullName>
        <ecNumber evidence="1">7.4.2.8</ecNumber>
    </recommendedName>
</protein>
<accession>Q4K7C1</accession>
<organism>
    <name type="scientific">Pseudomonas fluorescens (strain ATCC BAA-477 / NRRL B-23932 / Pf-5)</name>
    <dbReference type="NCBI Taxonomy" id="220664"/>
    <lineage>
        <taxon>Bacteria</taxon>
        <taxon>Pseudomonadati</taxon>
        <taxon>Pseudomonadota</taxon>
        <taxon>Gammaproteobacteria</taxon>
        <taxon>Pseudomonadales</taxon>
        <taxon>Pseudomonadaceae</taxon>
        <taxon>Pseudomonas</taxon>
    </lineage>
</organism>
<dbReference type="EC" id="7.4.2.8" evidence="1"/>
<dbReference type="EMBL" id="CP000076">
    <property type="protein sequence ID" value="AAY94011.1"/>
    <property type="molecule type" value="Genomic_DNA"/>
</dbReference>
<dbReference type="RefSeq" id="WP_011063035.1">
    <property type="nucleotide sequence ID" value="NC_004129.6"/>
</dbReference>
<dbReference type="SMR" id="Q4K7C1"/>
<dbReference type="STRING" id="220664.PFL_4781"/>
<dbReference type="KEGG" id="pfl:PFL_4781"/>
<dbReference type="PATRIC" id="fig|220664.5.peg.4892"/>
<dbReference type="eggNOG" id="COG0653">
    <property type="taxonomic scope" value="Bacteria"/>
</dbReference>
<dbReference type="HOGENOM" id="CLU_005314_3_0_6"/>
<dbReference type="Proteomes" id="UP000008540">
    <property type="component" value="Chromosome"/>
</dbReference>
<dbReference type="GO" id="GO:0031522">
    <property type="term" value="C:cell envelope Sec protein transport complex"/>
    <property type="evidence" value="ECO:0007669"/>
    <property type="project" value="TreeGrafter"/>
</dbReference>
<dbReference type="GO" id="GO:0005829">
    <property type="term" value="C:cytosol"/>
    <property type="evidence" value="ECO:0007669"/>
    <property type="project" value="TreeGrafter"/>
</dbReference>
<dbReference type="GO" id="GO:0005886">
    <property type="term" value="C:plasma membrane"/>
    <property type="evidence" value="ECO:0007669"/>
    <property type="project" value="UniProtKB-SubCell"/>
</dbReference>
<dbReference type="GO" id="GO:0005524">
    <property type="term" value="F:ATP binding"/>
    <property type="evidence" value="ECO:0007669"/>
    <property type="project" value="UniProtKB-UniRule"/>
</dbReference>
<dbReference type="GO" id="GO:0046872">
    <property type="term" value="F:metal ion binding"/>
    <property type="evidence" value="ECO:0007669"/>
    <property type="project" value="UniProtKB-KW"/>
</dbReference>
<dbReference type="GO" id="GO:0008564">
    <property type="term" value="F:protein-exporting ATPase activity"/>
    <property type="evidence" value="ECO:0007669"/>
    <property type="project" value="UniProtKB-EC"/>
</dbReference>
<dbReference type="GO" id="GO:0065002">
    <property type="term" value="P:intracellular protein transmembrane transport"/>
    <property type="evidence" value="ECO:0007669"/>
    <property type="project" value="UniProtKB-UniRule"/>
</dbReference>
<dbReference type="GO" id="GO:0017038">
    <property type="term" value="P:protein import"/>
    <property type="evidence" value="ECO:0007669"/>
    <property type="project" value="InterPro"/>
</dbReference>
<dbReference type="GO" id="GO:0006605">
    <property type="term" value="P:protein targeting"/>
    <property type="evidence" value="ECO:0007669"/>
    <property type="project" value="UniProtKB-UniRule"/>
</dbReference>
<dbReference type="GO" id="GO:0043952">
    <property type="term" value="P:protein transport by the Sec complex"/>
    <property type="evidence" value="ECO:0007669"/>
    <property type="project" value="TreeGrafter"/>
</dbReference>
<dbReference type="CDD" id="cd17928">
    <property type="entry name" value="DEXDc_SecA"/>
    <property type="match status" value="1"/>
</dbReference>
<dbReference type="CDD" id="cd18803">
    <property type="entry name" value="SF2_C_secA"/>
    <property type="match status" value="1"/>
</dbReference>
<dbReference type="FunFam" id="3.40.50.300:FF:000081">
    <property type="entry name" value="Preprotein translocase subunit SecA"/>
    <property type="match status" value="1"/>
</dbReference>
<dbReference type="FunFam" id="3.40.50.300:FF:000113">
    <property type="entry name" value="Preprotein translocase subunit SecA"/>
    <property type="match status" value="1"/>
</dbReference>
<dbReference type="FunFam" id="3.90.1440.10:FF:000001">
    <property type="entry name" value="Preprotein translocase subunit SecA"/>
    <property type="match status" value="1"/>
</dbReference>
<dbReference type="FunFam" id="1.10.3060.10:FF:000003">
    <property type="entry name" value="Protein translocase subunit SecA"/>
    <property type="match status" value="1"/>
</dbReference>
<dbReference type="Gene3D" id="1.10.3060.10">
    <property type="entry name" value="Helical scaffold and wing domains of SecA"/>
    <property type="match status" value="1"/>
</dbReference>
<dbReference type="Gene3D" id="3.40.50.300">
    <property type="entry name" value="P-loop containing nucleotide triphosphate hydrolases"/>
    <property type="match status" value="2"/>
</dbReference>
<dbReference type="Gene3D" id="3.90.1440.10">
    <property type="entry name" value="SecA, preprotein cross-linking domain"/>
    <property type="match status" value="1"/>
</dbReference>
<dbReference type="HAMAP" id="MF_01382">
    <property type="entry name" value="SecA"/>
    <property type="match status" value="1"/>
</dbReference>
<dbReference type="InterPro" id="IPR014001">
    <property type="entry name" value="Helicase_ATP-bd"/>
</dbReference>
<dbReference type="InterPro" id="IPR027417">
    <property type="entry name" value="P-loop_NTPase"/>
</dbReference>
<dbReference type="InterPro" id="IPR004027">
    <property type="entry name" value="SEC_C_motif"/>
</dbReference>
<dbReference type="InterPro" id="IPR000185">
    <property type="entry name" value="SecA"/>
</dbReference>
<dbReference type="InterPro" id="IPR011115">
    <property type="entry name" value="SecA_DEAD"/>
</dbReference>
<dbReference type="InterPro" id="IPR014018">
    <property type="entry name" value="SecA_motor_DEAD"/>
</dbReference>
<dbReference type="InterPro" id="IPR011130">
    <property type="entry name" value="SecA_preprotein_X-link_dom"/>
</dbReference>
<dbReference type="InterPro" id="IPR044722">
    <property type="entry name" value="SecA_SF2_C"/>
</dbReference>
<dbReference type="InterPro" id="IPR011116">
    <property type="entry name" value="SecA_Wing/Scaffold"/>
</dbReference>
<dbReference type="InterPro" id="IPR036266">
    <property type="entry name" value="SecA_Wing/Scaffold_sf"/>
</dbReference>
<dbReference type="InterPro" id="IPR036670">
    <property type="entry name" value="SecA_X-link_sf"/>
</dbReference>
<dbReference type="NCBIfam" id="NF009538">
    <property type="entry name" value="PRK12904.1"/>
    <property type="match status" value="1"/>
</dbReference>
<dbReference type="NCBIfam" id="TIGR00963">
    <property type="entry name" value="secA"/>
    <property type="match status" value="1"/>
</dbReference>
<dbReference type="PANTHER" id="PTHR30612:SF0">
    <property type="entry name" value="CHLOROPLAST PROTEIN-TRANSPORTING ATPASE"/>
    <property type="match status" value="1"/>
</dbReference>
<dbReference type="PANTHER" id="PTHR30612">
    <property type="entry name" value="SECA INNER MEMBRANE COMPONENT OF SEC PROTEIN SECRETION SYSTEM"/>
    <property type="match status" value="1"/>
</dbReference>
<dbReference type="Pfam" id="PF21090">
    <property type="entry name" value="P-loop_SecA"/>
    <property type="match status" value="1"/>
</dbReference>
<dbReference type="Pfam" id="PF02810">
    <property type="entry name" value="SEC-C"/>
    <property type="match status" value="1"/>
</dbReference>
<dbReference type="Pfam" id="PF07517">
    <property type="entry name" value="SecA_DEAD"/>
    <property type="match status" value="1"/>
</dbReference>
<dbReference type="Pfam" id="PF01043">
    <property type="entry name" value="SecA_PP_bind"/>
    <property type="match status" value="1"/>
</dbReference>
<dbReference type="Pfam" id="PF07516">
    <property type="entry name" value="SecA_SW"/>
    <property type="match status" value="1"/>
</dbReference>
<dbReference type="PRINTS" id="PR00906">
    <property type="entry name" value="SECA"/>
</dbReference>
<dbReference type="SMART" id="SM00957">
    <property type="entry name" value="SecA_DEAD"/>
    <property type="match status" value="1"/>
</dbReference>
<dbReference type="SMART" id="SM00958">
    <property type="entry name" value="SecA_PP_bind"/>
    <property type="match status" value="1"/>
</dbReference>
<dbReference type="SUPFAM" id="SSF81886">
    <property type="entry name" value="Helical scaffold and wing domains of SecA"/>
    <property type="match status" value="1"/>
</dbReference>
<dbReference type="SUPFAM" id="SSF52540">
    <property type="entry name" value="P-loop containing nucleoside triphosphate hydrolases"/>
    <property type="match status" value="2"/>
</dbReference>
<dbReference type="SUPFAM" id="SSF81767">
    <property type="entry name" value="Pre-protein crosslinking domain of SecA"/>
    <property type="match status" value="1"/>
</dbReference>
<dbReference type="PROSITE" id="PS51196">
    <property type="entry name" value="SECA_MOTOR_DEAD"/>
    <property type="match status" value="1"/>
</dbReference>
<evidence type="ECO:0000255" key="1">
    <source>
        <dbReference type="HAMAP-Rule" id="MF_01382"/>
    </source>
</evidence>
<gene>
    <name evidence="1" type="primary">secA</name>
    <name type="ordered locus">PFL_4781</name>
</gene>
<comment type="function">
    <text evidence="1">Part of the Sec protein translocase complex. Interacts with the SecYEG preprotein conducting channel. Has a central role in coupling the hydrolysis of ATP to the transfer of proteins into and across the cell membrane, serving both as a receptor for the preprotein-SecB complex and as an ATP-driven molecular motor driving the stepwise translocation of polypeptide chains across the membrane.</text>
</comment>
<comment type="catalytic activity">
    <reaction evidence="1">
        <text>ATP + H2O + cellular proteinSide 1 = ADP + phosphate + cellular proteinSide 2.</text>
        <dbReference type="EC" id="7.4.2.8"/>
    </reaction>
</comment>
<comment type="cofactor">
    <cofactor evidence="1">
        <name>Zn(2+)</name>
        <dbReference type="ChEBI" id="CHEBI:29105"/>
    </cofactor>
    <text evidence="1">May bind 1 zinc ion per subunit.</text>
</comment>
<comment type="subunit">
    <text evidence="1">Monomer and homodimer. Part of the essential Sec protein translocation apparatus which comprises SecA, SecYEG and auxiliary proteins SecDF-YajC and YidC.</text>
</comment>
<comment type="subcellular location">
    <subcellularLocation>
        <location evidence="1">Cell inner membrane</location>
        <topology evidence="1">Peripheral membrane protein</topology>
        <orientation evidence="1">Cytoplasmic side</orientation>
    </subcellularLocation>
    <subcellularLocation>
        <location evidence="1">Cytoplasm</location>
    </subcellularLocation>
    <text evidence="1">Distribution is 50-50.</text>
</comment>
<comment type="similarity">
    <text evidence="1">Belongs to the SecA family.</text>
</comment>
<feature type="chain" id="PRO_0000320897" description="Protein translocase subunit SecA">
    <location>
        <begin position="1"/>
        <end position="913"/>
    </location>
</feature>
<feature type="binding site" evidence="1">
    <location>
        <position position="87"/>
    </location>
    <ligand>
        <name>ATP</name>
        <dbReference type="ChEBI" id="CHEBI:30616"/>
    </ligand>
</feature>
<feature type="binding site" evidence="1">
    <location>
        <begin position="105"/>
        <end position="109"/>
    </location>
    <ligand>
        <name>ATP</name>
        <dbReference type="ChEBI" id="CHEBI:30616"/>
    </ligand>
</feature>
<feature type="binding site" evidence="1">
    <location>
        <position position="512"/>
    </location>
    <ligand>
        <name>ATP</name>
        <dbReference type="ChEBI" id="CHEBI:30616"/>
    </ligand>
</feature>
<feature type="binding site" evidence="1">
    <location>
        <position position="897"/>
    </location>
    <ligand>
        <name>Zn(2+)</name>
        <dbReference type="ChEBI" id="CHEBI:29105"/>
    </ligand>
</feature>
<feature type="binding site" evidence="1">
    <location>
        <position position="899"/>
    </location>
    <ligand>
        <name>Zn(2+)</name>
        <dbReference type="ChEBI" id="CHEBI:29105"/>
    </ligand>
</feature>
<feature type="binding site" evidence="1">
    <location>
        <position position="908"/>
    </location>
    <ligand>
        <name>Zn(2+)</name>
        <dbReference type="ChEBI" id="CHEBI:29105"/>
    </ligand>
</feature>
<feature type="binding site" evidence="1">
    <location>
        <position position="909"/>
    </location>
    <ligand>
        <name>Zn(2+)</name>
        <dbReference type="ChEBI" id="CHEBI:29105"/>
    </ligand>
</feature>
<name>SECA_PSEF5</name>